<dbReference type="EC" id="1.3.1.12"/>
<dbReference type="EMBL" id="M80245">
    <property type="protein sequence ID" value="AAA20868.1"/>
    <property type="molecule type" value="Genomic_DNA"/>
</dbReference>
<dbReference type="EMBL" id="AL009126">
    <property type="protein sequence ID" value="CAB14177.1"/>
    <property type="molecule type" value="Genomic_DNA"/>
</dbReference>
<dbReference type="RefSeq" id="NP_390142.1">
    <property type="nucleotide sequence ID" value="NC_000964.3"/>
</dbReference>
<dbReference type="RefSeq" id="WP_003230615.1">
    <property type="nucleotide sequence ID" value="NZ_OZ025638.1"/>
</dbReference>
<dbReference type="SMR" id="P20692"/>
<dbReference type="FunCoup" id="P20692">
    <property type="interactions" value="356"/>
</dbReference>
<dbReference type="STRING" id="224308.BSU22610"/>
<dbReference type="PaxDb" id="224308-BSU22610"/>
<dbReference type="EnsemblBacteria" id="CAB14177">
    <property type="protein sequence ID" value="CAB14177"/>
    <property type="gene ID" value="BSU_22610"/>
</dbReference>
<dbReference type="GeneID" id="939013"/>
<dbReference type="KEGG" id="bsu:BSU22610"/>
<dbReference type="eggNOG" id="COG0287">
    <property type="taxonomic scope" value="Bacteria"/>
</dbReference>
<dbReference type="InParanoid" id="P20692"/>
<dbReference type="OrthoDB" id="9802008at2"/>
<dbReference type="PhylomeDB" id="P20692"/>
<dbReference type="BioCyc" id="BSUB:BSU22610-MONOMER"/>
<dbReference type="UniPathway" id="UPA00122">
    <property type="reaction ID" value="UER00961"/>
</dbReference>
<dbReference type="Proteomes" id="UP000001570">
    <property type="component" value="Chromosome"/>
</dbReference>
<dbReference type="GO" id="GO:0070403">
    <property type="term" value="F:NAD+ binding"/>
    <property type="evidence" value="ECO:0000318"/>
    <property type="project" value="GO_Central"/>
</dbReference>
<dbReference type="GO" id="GO:0008977">
    <property type="term" value="F:prephenate dehydrogenase (NAD+) activity"/>
    <property type="evidence" value="ECO:0000318"/>
    <property type="project" value="GO_Central"/>
</dbReference>
<dbReference type="GO" id="GO:0004665">
    <property type="term" value="F:prephenate dehydrogenase (NADP+) activity"/>
    <property type="evidence" value="ECO:0007669"/>
    <property type="project" value="InterPro"/>
</dbReference>
<dbReference type="GO" id="GO:0006571">
    <property type="term" value="P:tyrosine biosynthetic process"/>
    <property type="evidence" value="ECO:0000318"/>
    <property type="project" value="GO_Central"/>
</dbReference>
<dbReference type="CDD" id="cd04909">
    <property type="entry name" value="ACT_PDH-BS"/>
    <property type="match status" value="1"/>
</dbReference>
<dbReference type="FunFam" id="1.10.3660.10:FF:000003">
    <property type="entry name" value="Prephenate dehydrogenase"/>
    <property type="match status" value="1"/>
</dbReference>
<dbReference type="FunFam" id="3.30.70.260:FF:000100">
    <property type="entry name" value="Prephenate dehydrogenase"/>
    <property type="match status" value="1"/>
</dbReference>
<dbReference type="FunFam" id="3.40.50.720:FF:000208">
    <property type="entry name" value="Prephenate dehydrogenase"/>
    <property type="match status" value="1"/>
</dbReference>
<dbReference type="Gene3D" id="3.30.70.260">
    <property type="match status" value="1"/>
</dbReference>
<dbReference type="Gene3D" id="1.10.3660.10">
    <property type="entry name" value="6-phosphogluconate dehydrogenase C-terminal like domain"/>
    <property type="match status" value="1"/>
</dbReference>
<dbReference type="Gene3D" id="3.40.50.720">
    <property type="entry name" value="NAD(P)-binding Rossmann-like Domain"/>
    <property type="match status" value="1"/>
</dbReference>
<dbReference type="InterPro" id="IPR008927">
    <property type="entry name" value="6-PGluconate_DH-like_C_sf"/>
</dbReference>
<dbReference type="InterPro" id="IPR045865">
    <property type="entry name" value="ACT-like_dom_sf"/>
</dbReference>
<dbReference type="InterPro" id="IPR002912">
    <property type="entry name" value="ACT_dom"/>
</dbReference>
<dbReference type="InterPro" id="IPR036291">
    <property type="entry name" value="NAD(P)-bd_dom_sf"/>
</dbReference>
<dbReference type="InterPro" id="IPR046825">
    <property type="entry name" value="PDH_C"/>
</dbReference>
<dbReference type="InterPro" id="IPR046826">
    <property type="entry name" value="PDH_N"/>
</dbReference>
<dbReference type="InterPro" id="IPR050812">
    <property type="entry name" value="Preph/Arog_dehydrog"/>
</dbReference>
<dbReference type="InterPro" id="IPR003099">
    <property type="entry name" value="Prephen_DH"/>
</dbReference>
<dbReference type="NCBIfam" id="NF005107">
    <property type="entry name" value="PRK06545.1-5"/>
    <property type="match status" value="1"/>
</dbReference>
<dbReference type="PANTHER" id="PTHR21363">
    <property type="entry name" value="PREPHENATE DEHYDROGENASE"/>
    <property type="match status" value="1"/>
</dbReference>
<dbReference type="PANTHER" id="PTHR21363:SF0">
    <property type="entry name" value="PREPHENATE DEHYDROGENASE [NADP(+)]"/>
    <property type="match status" value="1"/>
</dbReference>
<dbReference type="Pfam" id="PF01842">
    <property type="entry name" value="ACT"/>
    <property type="match status" value="1"/>
</dbReference>
<dbReference type="Pfam" id="PF20463">
    <property type="entry name" value="PDH_C"/>
    <property type="match status" value="1"/>
</dbReference>
<dbReference type="Pfam" id="PF02153">
    <property type="entry name" value="PDH_N"/>
    <property type="match status" value="1"/>
</dbReference>
<dbReference type="SUPFAM" id="SSF48179">
    <property type="entry name" value="6-phosphogluconate dehydrogenase C-terminal domain-like"/>
    <property type="match status" value="1"/>
</dbReference>
<dbReference type="SUPFAM" id="SSF55021">
    <property type="entry name" value="ACT-like"/>
    <property type="match status" value="1"/>
</dbReference>
<dbReference type="SUPFAM" id="SSF51735">
    <property type="entry name" value="NAD(P)-binding Rossmann-fold domains"/>
    <property type="match status" value="1"/>
</dbReference>
<dbReference type="PROSITE" id="PS51671">
    <property type="entry name" value="ACT"/>
    <property type="match status" value="1"/>
</dbReference>
<dbReference type="PROSITE" id="PS51176">
    <property type="entry name" value="PDH_ADH"/>
    <property type="match status" value="1"/>
</dbReference>
<sequence>MNQMKDTILLAGLGLIGGSIALAIKKNHPGKRIIGIDISDEQAVAALKLGVIDDRADSFISGVKEAATVIIATPVEQTLVMLEELAHSGIEHELLITDVGSTKQKVVDYADQVLPSRYQFVGGHPMAGSHKSGVAAAKEFLFENAFYILTPGQKTDKQAVEQLKNLLKGTNAHFVEMSPEEHDGVTSVISHFPHIVAASLVHQTHHSENLYPLVKRFAAGGFRDITRIASSSPAMWRDILLHNKDKILDRFDEWIREIDKIRTYVEQEDAENLFRYFKTAKDYRDGLPLRQKGAIPAFYDLYVDVPDHPGVISEITAILAAERISITNIRIIETREDINGILRISFQSDDDRKRAEQCIEARAEYETFYAD</sequence>
<gene>
    <name type="primary">tyrA</name>
    <name type="ordered locus">BSU22610</name>
</gene>
<protein>
    <recommendedName>
        <fullName>Prephenate dehydrogenase</fullName>
        <shortName>PDH</shortName>
        <ecNumber>1.3.1.12</ecNumber>
    </recommendedName>
</protein>
<keyword id="KW-0028">Amino-acid biosynthesis</keyword>
<keyword id="KW-0057">Aromatic amino acid biosynthesis</keyword>
<keyword id="KW-0520">NAD</keyword>
<keyword id="KW-0560">Oxidoreductase</keyword>
<keyword id="KW-1185">Reference proteome</keyword>
<keyword id="KW-0827">Tyrosine biosynthesis</keyword>
<evidence type="ECO:0000255" key="1"/>
<evidence type="ECO:0000255" key="2">
    <source>
        <dbReference type="PROSITE-ProRule" id="PRU00522"/>
    </source>
</evidence>
<evidence type="ECO:0000255" key="3">
    <source>
        <dbReference type="PROSITE-ProRule" id="PRU01007"/>
    </source>
</evidence>
<evidence type="ECO:0000305" key="4"/>
<accession>P20692</accession>
<comment type="catalytic activity">
    <reaction>
        <text>prephenate + NAD(+) = 3-(4-hydroxyphenyl)pyruvate + CO2 + NADH</text>
        <dbReference type="Rhea" id="RHEA:13869"/>
        <dbReference type="ChEBI" id="CHEBI:16526"/>
        <dbReference type="ChEBI" id="CHEBI:29934"/>
        <dbReference type="ChEBI" id="CHEBI:36242"/>
        <dbReference type="ChEBI" id="CHEBI:57540"/>
        <dbReference type="ChEBI" id="CHEBI:57945"/>
        <dbReference type="EC" id="1.3.1.12"/>
    </reaction>
</comment>
<comment type="pathway">
    <text>Amino-acid biosynthesis; L-tyrosine biosynthesis; (4-hydroxyphenyl)pyruvate from prephenate (NAD(+) route): step 1/1.</text>
</comment>
<comment type="similarity">
    <text evidence="4">Belongs to the prephenate/arogenate dehydrogenase family.</text>
</comment>
<reference key="1">
    <citation type="journal article" date="1986" name="Gene">
        <title>The organization and nucleotide sequence of the Bacillus subtilis hisH, tyrA and aroE genes.</title>
        <authorList>
            <person name="Henner D.J."/>
            <person name="Band L."/>
            <person name="Flaggs G."/>
            <person name="Chen E."/>
        </authorList>
    </citation>
    <scope>NUCLEOTIDE SEQUENCE [GENOMIC DNA]</scope>
</reference>
<reference key="2">
    <citation type="journal article" date="1997" name="Nature">
        <title>The complete genome sequence of the Gram-positive bacterium Bacillus subtilis.</title>
        <authorList>
            <person name="Kunst F."/>
            <person name="Ogasawara N."/>
            <person name="Moszer I."/>
            <person name="Albertini A.M."/>
            <person name="Alloni G."/>
            <person name="Azevedo V."/>
            <person name="Bertero M.G."/>
            <person name="Bessieres P."/>
            <person name="Bolotin A."/>
            <person name="Borchert S."/>
            <person name="Borriss R."/>
            <person name="Boursier L."/>
            <person name="Brans A."/>
            <person name="Braun M."/>
            <person name="Brignell S.C."/>
            <person name="Bron S."/>
            <person name="Brouillet S."/>
            <person name="Bruschi C.V."/>
            <person name="Caldwell B."/>
            <person name="Capuano V."/>
            <person name="Carter N.M."/>
            <person name="Choi S.-K."/>
            <person name="Codani J.-J."/>
            <person name="Connerton I.F."/>
            <person name="Cummings N.J."/>
            <person name="Daniel R.A."/>
            <person name="Denizot F."/>
            <person name="Devine K.M."/>
            <person name="Duesterhoeft A."/>
            <person name="Ehrlich S.D."/>
            <person name="Emmerson P.T."/>
            <person name="Entian K.-D."/>
            <person name="Errington J."/>
            <person name="Fabret C."/>
            <person name="Ferrari E."/>
            <person name="Foulger D."/>
            <person name="Fritz C."/>
            <person name="Fujita M."/>
            <person name="Fujita Y."/>
            <person name="Fuma S."/>
            <person name="Galizzi A."/>
            <person name="Galleron N."/>
            <person name="Ghim S.-Y."/>
            <person name="Glaser P."/>
            <person name="Goffeau A."/>
            <person name="Golightly E.J."/>
            <person name="Grandi G."/>
            <person name="Guiseppi G."/>
            <person name="Guy B.J."/>
            <person name="Haga K."/>
            <person name="Haiech J."/>
            <person name="Harwood C.R."/>
            <person name="Henaut A."/>
            <person name="Hilbert H."/>
            <person name="Holsappel S."/>
            <person name="Hosono S."/>
            <person name="Hullo M.-F."/>
            <person name="Itaya M."/>
            <person name="Jones L.-M."/>
            <person name="Joris B."/>
            <person name="Karamata D."/>
            <person name="Kasahara Y."/>
            <person name="Klaerr-Blanchard M."/>
            <person name="Klein C."/>
            <person name="Kobayashi Y."/>
            <person name="Koetter P."/>
            <person name="Koningstein G."/>
            <person name="Krogh S."/>
            <person name="Kumano M."/>
            <person name="Kurita K."/>
            <person name="Lapidus A."/>
            <person name="Lardinois S."/>
            <person name="Lauber J."/>
            <person name="Lazarevic V."/>
            <person name="Lee S.-M."/>
            <person name="Levine A."/>
            <person name="Liu H."/>
            <person name="Masuda S."/>
            <person name="Mauel C."/>
            <person name="Medigue C."/>
            <person name="Medina N."/>
            <person name="Mellado R.P."/>
            <person name="Mizuno M."/>
            <person name="Moestl D."/>
            <person name="Nakai S."/>
            <person name="Noback M."/>
            <person name="Noone D."/>
            <person name="O'Reilly M."/>
            <person name="Ogawa K."/>
            <person name="Ogiwara A."/>
            <person name="Oudega B."/>
            <person name="Park S.-H."/>
            <person name="Parro V."/>
            <person name="Pohl T.M."/>
            <person name="Portetelle D."/>
            <person name="Porwollik S."/>
            <person name="Prescott A.M."/>
            <person name="Presecan E."/>
            <person name="Pujic P."/>
            <person name="Purnelle B."/>
            <person name="Rapoport G."/>
            <person name="Rey M."/>
            <person name="Reynolds S."/>
            <person name="Rieger M."/>
            <person name="Rivolta C."/>
            <person name="Rocha E."/>
            <person name="Roche B."/>
            <person name="Rose M."/>
            <person name="Sadaie Y."/>
            <person name="Sato T."/>
            <person name="Scanlan E."/>
            <person name="Schleich S."/>
            <person name="Schroeter R."/>
            <person name="Scoffone F."/>
            <person name="Sekiguchi J."/>
            <person name="Sekowska A."/>
            <person name="Seror S.J."/>
            <person name="Serror P."/>
            <person name="Shin B.-S."/>
            <person name="Soldo B."/>
            <person name="Sorokin A."/>
            <person name="Tacconi E."/>
            <person name="Takagi T."/>
            <person name="Takahashi H."/>
            <person name="Takemaru K."/>
            <person name="Takeuchi M."/>
            <person name="Tamakoshi A."/>
            <person name="Tanaka T."/>
            <person name="Terpstra P."/>
            <person name="Tognoni A."/>
            <person name="Tosato V."/>
            <person name="Uchiyama S."/>
            <person name="Vandenbol M."/>
            <person name="Vannier F."/>
            <person name="Vassarotti A."/>
            <person name="Viari A."/>
            <person name="Wambutt R."/>
            <person name="Wedler E."/>
            <person name="Wedler H."/>
            <person name="Weitzenegger T."/>
            <person name="Winters P."/>
            <person name="Wipat A."/>
            <person name="Yamamoto H."/>
            <person name="Yamane K."/>
            <person name="Yasumoto K."/>
            <person name="Yata K."/>
            <person name="Yoshida K."/>
            <person name="Yoshikawa H.-F."/>
            <person name="Zumstein E."/>
            <person name="Yoshikawa H."/>
            <person name="Danchin A."/>
        </authorList>
    </citation>
    <scope>NUCLEOTIDE SEQUENCE [LARGE SCALE GENOMIC DNA]</scope>
    <source>
        <strain>168</strain>
    </source>
</reference>
<feature type="chain" id="PRO_0000119192" description="Prephenate dehydrogenase">
    <location>
        <begin position="1"/>
        <end position="371"/>
    </location>
</feature>
<feature type="domain" description="Prephenate/arogenate dehydrogenase" evidence="2">
    <location>
        <begin position="6"/>
        <end position="295"/>
    </location>
</feature>
<feature type="domain" description="ACT" evidence="3">
    <location>
        <begin position="300"/>
        <end position="371"/>
    </location>
</feature>
<feature type="binding site" evidence="1">
    <location>
        <begin position="7"/>
        <end position="37"/>
    </location>
    <ligand>
        <name>NAD(+)</name>
        <dbReference type="ChEBI" id="CHEBI:57540"/>
    </ligand>
</feature>
<organism>
    <name type="scientific">Bacillus subtilis (strain 168)</name>
    <dbReference type="NCBI Taxonomy" id="224308"/>
    <lineage>
        <taxon>Bacteria</taxon>
        <taxon>Bacillati</taxon>
        <taxon>Bacillota</taxon>
        <taxon>Bacilli</taxon>
        <taxon>Bacillales</taxon>
        <taxon>Bacillaceae</taxon>
        <taxon>Bacillus</taxon>
    </lineage>
</organism>
<name>TYRA_BACSU</name>
<proteinExistence type="inferred from homology"/>